<keyword id="KW-0520">NAD</keyword>
<keyword id="KW-0560">Oxidoreductase</keyword>
<keyword id="KW-1185">Reference proteome</keyword>
<keyword id="KW-0732">Signal</keyword>
<protein>
    <recommendedName>
        <fullName>Oxidoreductase NAD-binding domain-containing protein 1</fullName>
        <ecNumber>1.-.-.-</ecNumber>
    </recommendedName>
</protein>
<organism>
    <name type="scientific">Xenopus tropicalis</name>
    <name type="common">Western clawed frog</name>
    <name type="synonym">Silurana tropicalis</name>
    <dbReference type="NCBI Taxonomy" id="8364"/>
    <lineage>
        <taxon>Eukaryota</taxon>
        <taxon>Metazoa</taxon>
        <taxon>Chordata</taxon>
        <taxon>Craniata</taxon>
        <taxon>Vertebrata</taxon>
        <taxon>Euteleostomi</taxon>
        <taxon>Amphibia</taxon>
        <taxon>Batrachia</taxon>
        <taxon>Anura</taxon>
        <taxon>Pipoidea</taxon>
        <taxon>Pipidae</taxon>
        <taxon>Xenopodinae</taxon>
        <taxon>Xenopus</taxon>
        <taxon>Silurana</taxon>
    </lineage>
</organism>
<reference key="1">
    <citation type="submission" date="2007-03" db="EMBL/GenBank/DDBJ databases">
        <authorList>
            <consortium name="NIH - Xenopus Gene Collection (XGC) project"/>
        </authorList>
    </citation>
    <scope>NUCLEOTIDE SEQUENCE [LARGE SCALE MRNA]</scope>
    <source>
        <tissue>Embryo</tissue>
    </source>
</reference>
<name>OXND1_XENTR</name>
<accession>A4IHY0</accession>
<proteinExistence type="evidence at transcript level"/>
<sequence>MALVAGSAAYQVLRGVTGTFPTQSATLLARAPALCARTLNRRRMSSRRQTDHLERTANTFRQEIISPAKVCEITNESATVKRVRLAIANREFTFKAGQWVDFFIPGVPKVGGFSICSCPGLLETEGVLELAVKYNLHPPAHWIHSQCTLGSEVAVRVGGEFCFDPQPSDLPLDLVLIAGGVGINPLFSILLHVADLHKTHEMTGRGFQMGNVKLYYCAKNTGELLFKRNILDLVKSFPGKITCSFHVTQQSSPVCVELQPFITEGRITEKDLASYVSTDQLCYICGPPPMIESTCKQLESLHVPKEQILFEKWW</sequence>
<dbReference type="EC" id="1.-.-.-"/>
<dbReference type="EMBL" id="BC135746">
    <property type="protein sequence ID" value="AAI35747.1"/>
    <property type="molecule type" value="mRNA"/>
</dbReference>
<dbReference type="RefSeq" id="NP_001096328.1">
    <property type="nucleotide sequence ID" value="NM_001102858.1"/>
</dbReference>
<dbReference type="SMR" id="A4IHY0"/>
<dbReference type="FunCoup" id="A4IHY0">
    <property type="interactions" value="153"/>
</dbReference>
<dbReference type="STRING" id="8364.ENSXETP00000051499"/>
<dbReference type="PaxDb" id="8364-ENSXETP00000054711"/>
<dbReference type="DNASU" id="100124914"/>
<dbReference type="GeneID" id="100124914"/>
<dbReference type="KEGG" id="xtr:100124914"/>
<dbReference type="AGR" id="Xenbase:XB-GENE-971236"/>
<dbReference type="CTD" id="92106"/>
<dbReference type="Xenbase" id="XB-GENE-971236">
    <property type="gene designation" value="oxnad1"/>
</dbReference>
<dbReference type="eggNOG" id="KOG0534">
    <property type="taxonomic scope" value="Eukaryota"/>
</dbReference>
<dbReference type="HOGENOM" id="CLU_003827_7_1_1"/>
<dbReference type="InParanoid" id="A4IHY0"/>
<dbReference type="OrthoDB" id="436496at2759"/>
<dbReference type="TreeFam" id="TF329774"/>
<dbReference type="Proteomes" id="UP000008143">
    <property type="component" value="Chromosome 6"/>
</dbReference>
<dbReference type="ExpressionAtlas" id="A4IHY0">
    <property type="expression patterns" value="differential"/>
</dbReference>
<dbReference type="GO" id="GO:0016491">
    <property type="term" value="F:oxidoreductase activity"/>
    <property type="evidence" value="ECO:0007669"/>
    <property type="project" value="UniProtKB-KW"/>
</dbReference>
<dbReference type="CDD" id="cd00322">
    <property type="entry name" value="FNR_like"/>
    <property type="match status" value="1"/>
</dbReference>
<dbReference type="Gene3D" id="3.40.50.80">
    <property type="entry name" value="Nucleotide-binding domain of ferredoxin-NADP reductase (FNR) module"/>
    <property type="match status" value="1"/>
</dbReference>
<dbReference type="Gene3D" id="2.40.30.10">
    <property type="entry name" value="Translation factors"/>
    <property type="match status" value="1"/>
</dbReference>
<dbReference type="InterPro" id="IPR017927">
    <property type="entry name" value="FAD-bd_FR_type"/>
</dbReference>
<dbReference type="InterPro" id="IPR039261">
    <property type="entry name" value="FNR_nucleotide-bd"/>
</dbReference>
<dbReference type="InterPro" id="IPR052128">
    <property type="entry name" value="Oxidoreductase_NAD-binding"/>
</dbReference>
<dbReference type="InterPro" id="IPR001433">
    <property type="entry name" value="OxRdtase_FAD/NAD-bd"/>
</dbReference>
<dbReference type="InterPro" id="IPR017938">
    <property type="entry name" value="Riboflavin_synthase-like_b-brl"/>
</dbReference>
<dbReference type="PANTHER" id="PTHR46505">
    <property type="entry name" value="OXIDOREDUCTASE NAD-BINDING DOMAIN-CONTAINING PROTEIN 1"/>
    <property type="match status" value="1"/>
</dbReference>
<dbReference type="PANTHER" id="PTHR46505:SF1">
    <property type="entry name" value="OXIDOREDUCTASE NAD-BINDING DOMAIN-CONTAINING PROTEIN 1"/>
    <property type="match status" value="1"/>
</dbReference>
<dbReference type="Pfam" id="PF00175">
    <property type="entry name" value="NAD_binding_1"/>
    <property type="match status" value="1"/>
</dbReference>
<dbReference type="PRINTS" id="PR00410">
    <property type="entry name" value="PHEHYDRXLASE"/>
</dbReference>
<dbReference type="SUPFAM" id="SSF52343">
    <property type="entry name" value="Ferredoxin reductase-like, C-terminal NADP-linked domain"/>
    <property type="match status" value="1"/>
</dbReference>
<dbReference type="SUPFAM" id="SSF63380">
    <property type="entry name" value="Riboflavin synthase domain-like"/>
    <property type="match status" value="1"/>
</dbReference>
<dbReference type="PROSITE" id="PS51384">
    <property type="entry name" value="FAD_FR"/>
    <property type="match status" value="1"/>
</dbReference>
<evidence type="ECO:0000250" key="1"/>
<evidence type="ECO:0000255" key="2"/>
<evidence type="ECO:0000255" key="3">
    <source>
        <dbReference type="PROSITE-ProRule" id="PRU00716"/>
    </source>
</evidence>
<gene>
    <name type="primary">oxnad1</name>
</gene>
<feature type="signal peptide" evidence="2">
    <location>
        <begin position="1"/>
        <end position="18"/>
    </location>
</feature>
<feature type="chain" id="PRO_0000299576" description="Oxidoreductase NAD-binding domain-containing protein 1">
    <location>
        <begin position="19"/>
        <end position="314"/>
    </location>
</feature>
<feature type="domain" description="FAD-binding FR-type" evidence="3">
    <location>
        <begin position="63"/>
        <end position="166"/>
    </location>
</feature>
<feature type="binding site" evidence="1">
    <location>
        <begin position="180"/>
        <end position="185"/>
    </location>
    <ligand>
        <name>NAD(+)</name>
        <dbReference type="ChEBI" id="CHEBI:57540"/>
    </ligand>
</feature>